<reference key="1">
    <citation type="journal article" date="2008" name="J. Bacteriol.">
        <title>The complete genome sequence of Escherichia coli DH10B: insights into the biology of a laboratory workhorse.</title>
        <authorList>
            <person name="Durfee T."/>
            <person name="Nelson R."/>
            <person name="Baldwin S."/>
            <person name="Plunkett G. III"/>
            <person name="Burland V."/>
            <person name="Mau B."/>
            <person name="Petrosino J.F."/>
            <person name="Qin X."/>
            <person name="Muzny D.M."/>
            <person name="Ayele M."/>
            <person name="Gibbs R.A."/>
            <person name="Csorgo B."/>
            <person name="Posfai G."/>
            <person name="Weinstock G.M."/>
            <person name="Blattner F.R."/>
        </authorList>
    </citation>
    <scope>NUCLEOTIDE SEQUENCE [LARGE SCALE GENOMIC DNA]</scope>
    <source>
        <strain>K12 / DH10B</strain>
    </source>
</reference>
<keyword id="KW-0010">Activator</keyword>
<keyword id="KW-0067">ATP-binding</keyword>
<keyword id="KW-0119">Carbohydrate metabolism</keyword>
<keyword id="KW-0238">DNA-binding</keyword>
<keyword id="KW-0547">Nucleotide-binding</keyword>
<keyword id="KW-0804">Transcription</keyword>
<keyword id="KW-0805">Transcription regulation</keyword>
<protein>
    <recommendedName>
        <fullName evidence="1">HTH-type transcriptional regulator MalT</fullName>
    </recommendedName>
    <alternativeName>
        <fullName evidence="1">ATP-dependent transcriptional activator MalT</fullName>
    </alternativeName>
</protein>
<gene>
    <name evidence="1" type="primary">malT</name>
    <name type="ordered locus">ECDH10B_3593</name>
</gene>
<feature type="chain" id="PRO_1000139847" description="HTH-type transcriptional regulator MalT">
    <location>
        <begin position="1"/>
        <end position="901"/>
    </location>
</feature>
<feature type="domain" description="HTH luxR-type" evidence="1">
    <location>
        <begin position="829"/>
        <end position="894"/>
    </location>
</feature>
<feature type="DNA-binding region" description="H-T-H motif" evidence="1">
    <location>
        <begin position="853"/>
        <end position="872"/>
    </location>
</feature>
<feature type="binding site" evidence="1">
    <location>
        <begin position="39"/>
        <end position="46"/>
    </location>
    <ligand>
        <name>ATP</name>
        <dbReference type="ChEBI" id="CHEBI:30616"/>
    </ligand>
</feature>
<organism>
    <name type="scientific">Escherichia coli (strain K12 / DH10B)</name>
    <dbReference type="NCBI Taxonomy" id="316385"/>
    <lineage>
        <taxon>Bacteria</taxon>
        <taxon>Pseudomonadati</taxon>
        <taxon>Pseudomonadota</taxon>
        <taxon>Gammaproteobacteria</taxon>
        <taxon>Enterobacterales</taxon>
        <taxon>Enterobacteriaceae</taxon>
        <taxon>Escherichia</taxon>
    </lineage>
</organism>
<proteinExistence type="inferred from homology"/>
<evidence type="ECO:0000255" key="1">
    <source>
        <dbReference type="HAMAP-Rule" id="MF_01247"/>
    </source>
</evidence>
<dbReference type="EMBL" id="CP000948">
    <property type="protein sequence ID" value="ACB04476.1"/>
    <property type="molecule type" value="Genomic_DNA"/>
</dbReference>
<dbReference type="RefSeq" id="WP_000906961.1">
    <property type="nucleotide sequence ID" value="NC_010473.1"/>
</dbReference>
<dbReference type="EMDB" id="EMD-16140"/>
<dbReference type="SMR" id="B1X764"/>
<dbReference type="KEGG" id="ecd:ECDH10B_3593"/>
<dbReference type="HOGENOM" id="CLU_006325_3_0_6"/>
<dbReference type="GO" id="GO:0005524">
    <property type="term" value="F:ATP binding"/>
    <property type="evidence" value="ECO:0007669"/>
    <property type="project" value="UniProtKB-UniRule"/>
</dbReference>
<dbReference type="GO" id="GO:0003677">
    <property type="term" value="F:DNA binding"/>
    <property type="evidence" value="ECO:0007669"/>
    <property type="project" value="UniProtKB-KW"/>
</dbReference>
<dbReference type="GO" id="GO:0003700">
    <property type="term" value="F:DNA-binding transcription factor activity"/>
    <property type="evidence" value="ECO:0007669"/>
    <property type="project" value="UniProtKB-UniRule"/>
</dbReference>
<dbReference type="GO" id="GO:0045913">
    <property type="term" value="P:positive regulation of carbohydrate metabolic process"/>
    <property type="evidence" value="ECO:0007669"/>
    <property type="project" value="UniProtKB-UniRule"/>
</dbReference>
<dbReference type="GO" id="GO:0045893">
    <property type="term" value="P:positive regulation of DNA-templated transcription"/>
    <property type="evidence" value="ECO:0007669"/>
    <property type="project" value="UniProtKB-UniRule"/>
</dbReference>
<dbReference type="CDD" id="cd06170">
    <property type="entry name" value="LuxR_C_like"/>
    <property type="match status" value="1"/>
</dbReference>
<dbReference type="FunFam" id="1.10.10.10:FF:000115">
    <property type="entry name" value="HTH-type transcriptional regulator MalT"/>
    <property type="match status" value="1"/>
</dbReference>
<dbReference type="FunFam" id="1.25.40.10:FF:000086">
    <property type="entry name" value="HTH-type transcriptional regulator MalT"/>
    <property type="match status" value="1"/>
</dbReference>
<dbReference type="Gene3D" id="3.40.50.300">
    <property type="entry name" value="P-loop containing nucleotide triphosphate hydrolases"/>
    <property type="match status" value="1"/>
</dbReference>
<dbReference type="Gene3D" id="1.25.40.10">
    <property type="entry name" value="Tetratricopeptide repeat domain"/>
    <property type="match status" value="1"/>
</dbReference>
<dbReference type="Gene3D" id="1.10.10.10">
    <property type="entry name" value="Winged helix-like DNA-binding domain superfamily/Winged helix DNA-binding domain"/>
    <property type="match status" value="1"/>
</dbReference>
<dbReference type="HAMAP" id="MF_01247">
    <property type="entry name" value="HTH_type_MalT"/>
    <property type="match status" value="1"/>
</dbReference>
<dbReference type="InterPro" id="IPR027417">
    <property type="entry name" value="P-loop_NTPase"/>
</dbReference>
<dbReference type="InterPro" id="IPR016032">
    <property type="entry name" value="Sig_transdc_resp-reg_C-effctor"/>
</dbReference>
<dbReference type="InterPro" id="IPR011990">
    <property type="entry name" value="TPR-like_helical_dom_sf"/>
</dbReference>
<dbReference type="InterPro" id="IPR041617">
    <property type="entry name" value="TPR_MalT"/>
</dbReference>
<dbReference type="InterPro" id="IPR023768">
    <property type="entry name" value="Tscrpt_reg_HTH_MalT"/>
</dbReference>
<dbReference type="InterPro" id="IPR000792">
    <property type="entry name" value="Tscrpt_reg_LuxR_C"/>
</dbReference>
<dbReference type="InterPro" id="IPR036388">
    <property type="entry name" value="WH-like_DNA-bd_sf"/>
</dbReference>
<dbReference type="NCBIfam" id="NF003420">
    <property type="entry name" value="PRK04841.1"/>
    <property type="match status" value="1"/>
</dbReference>
<dbReference type="PANTHER" id="PTHR44688">
    <property type="entry name" value="DNA-BINDING TRANSCRIPTIONAL ACTIVATOR DEVR_DOSR"/>
    <property type="match status" value="1"/>
</dbReference>
<dbReference type="PANTHER" id="PTHR44688:SF16">
    <property type="entry name" value="DNA-BINDING TRANSCRIPTIONAL ACTIVATOR DEVR_DOSR"/>
    <property type="match status" value="1"/>
</dbReference>
<dbReference type="Pfam" id="PF00196">
    <property type="entry name" value="GerE"/>
    <property type="match status" value="1"/>
</dbReference>
<dbReference type="Pfam" id="PF17874">
    <property type="entry name" value="TPR_MalT"/>
    <property type="match status" value="1"/>
</dbReference>
<dbReference type="PRINTS" id="PR00038">
    <property type="entry name" value="HTHLUXR"/>
</dbReference>
<dbReference type="SMART" id="SM00421">
    <property type="entry name" value="HTH_LUXR"/>
    <property type="match status" value="1"/>
</dbReference>
<dbReference type="SUPFAM" id="SSF46894">
    <property type="entry name" value="C-terminal effector domain of the bipartite response regulators"/>
    <property type="match status" value="1"/>
</dbReference>
<dbReference type="SUPFAM" id="SSF52540">
    <property type="entry name" value="P-loop containing nucleoside triphosphate hydrolases"/>
    <property type="match status" value="1"/>
</dbReference>
<dbReference type="SUPFAM" id="SSF48452">
    <property type="entry name" value="TPR-like"/>
    <property type="match status" value="1"/>
</dbReference>
<dbReference type="PROSITE" id="PS00622">
    <property type="entry name" value="HTH_LUXR_1"/>
    <property type="match status" value="1"/>
</dbReference>
<dbReference type="PROSITE" id="PS50043">
    <property type="entry name" value="HTH_LUXR_2"/>
    <property type="match status" value="1"/>
</dbReference>
<accession>B1X764</accession>
<sequence length="901" mass="103118">MLIPSKLSRPVRLDHTVVRERLLAKLSGANNFRLALITSPAGYGKTTLISQWAAGKNDIGWYSLDEGDNQQERFASYLIAAVQQATNGHCAICETMAQKRQYASLTSLFAQLFIELAEWHSPLYLVIDDYHLITNPVIHESMRFFIRHQPENLTLVVLSRNLPQLGIANLRVRDQLLEIGSQQLAFTHQEAKQFFDCRLSSPIEAAESSRICDDVSGWATALQLIALSARQNTHSAHKSARRLAGINASHLSDYLVDEVLDNVDLATRHFLLKSAILRSMNDALITRVTGEENGQMRLEEIERQGLFLQRMDDTGEWFCYHPLFGNFLRQRCQWELAAELPEIHRAAAESWMAQGFPSEAIHHALAAGDALMLRDILLNHAWSLFNHSELSLLEESLKALPWDSLLENPQLVLLQAWLMQSQHRYGEVNTLLARAEHEIKDIREDTMHAEFNALRAQVAINDGNPDEAERLAKLALEELPPGWFYSRIVATSVLGEVLHCKGELTRSLALMQQTEQMARQHDVWHYALWSLIQQSEILFAQGFLQTAWETQEKAFQLINEQHLEQLPMHEFLVRIRAQLLWAWARLDEAEASARSGIEVLSSYQPQQQLQCLAMLIQCSLARGDLDNARSQLNRLENLLGNGKYHSDWISNANKVRVIYWQMTGDKAAAANWLRHTAKPEFANNHFLQGQWRNIARAQILLGEFEPAEIVLEELNENARSLRLMSDLNRNLLLLNQLYWQAGRKSDAQRVLLDALKLANRTGFISHFVIEGEAMAQQLRQLIQLNTLPELEQHRAQRILREINQHHRHKFAHFDENFVERLLNHPEVPELIRTSPLTQREWQVLGLIYSGYSNEQIAGELEVAATTIKTHIRNLYQKLGVAHRQDAVQHAQQLLKMMGYGV</sequence>
<name>MALT_ECODH</name>
<comment type="function">
    <text evidence="1">Positively regulates the transcription of the maltose regulon whose gene products are responsible for uptake and catabolism of malto-oligosaccharides. Specifically binds to the promoter region of its target genes, recognizing a short DNA motif called the MalT box.</text>
</comment>
<comment type="activity regulation">
    <text evidence="1">Activated by ATP and maltotriose, which are both required for DNA binding.</text>
</comment>
<comment type="subunit">
    <text evidence="1">Monomer in solution. Oligomerizes to an active state in the presence of the positive effectors ATP and maltotriose.</text>
</comment>
<comment type="similarity">
    <text evidence="1">Belongs to the MalT family.</text>
</comment>